<name>TARI_STRPI</name>
<protein>
    <recommendedName>
        <fullName evidence="1">Ribitol-5-phosphate cytidylyltransferase</fullName>
        <ecNumber evidence="1">2.7.7.40</ecNumber>
    </recommendedName>
</protein>
<organism>
    <name type="scientific">Streptococcus pneumoniae (strain Hungary19A-6)</name>
    <dbReference type="NCBI Taxonomy" id="487214"/>
    <lineage>
        <taxon>Bacteria</taxon>
        <taxon>Bacillati</taxon>
        <taxon>Bacillota</taxon>
        <taxon>Bacilli</taxon>
        <taxon>Lactobacillales</taxon>
        <taxon>Streptococcaceae</taxon>
        <taxon>Streptococcus</taxon>
    </lineage>
</organism>
<sequence>MIYAGILAGGTGTRMGISNLPKQFLELGDRPILIHTIEKFVLEPSIEKIVVGVHGDWVSHAEDLVDKYLPLYKERIIITKGGADRNTSIKKIIEAIDAYRPLTPEDIVVTHDSVRPFITLRMIQDNIQLAQNHDAVDTVVEAVDTIVESTNGQFITDIPNRAHLYQGQTPQTFRCKDFVDLYGSLSDEEKEILTDACKIFVIKGKDVALAKGEYSNLKITTVTDLKIAKSMIEKD</sequence>
<gene>
    <name evidence="1" type="primary">tarI</name>
    <name type="ordered locus">SPH_1387</name>
</gene>
<evidence type="ECO:0000255" key="1">
    <source>
        <dbReference type="HAMAP-Rule" id="MF_02068"/>
    </source>
</evidence>
<reference key="1">
    <citation type="journal article" date="2010" name="Genome Biol.">
        <title>Structure and dynamics of the pan-genome of Streptococcus pneumoniae and closely related species.</title>
        <authorList>
            <person name="Donati C."/>
            <person name="Hiller N.L."/>
            <person name="Tettelin H."/>
            <person name="Muzzi A."/>
            <person name="Croucher N.J."/>
            <person name="Angiuoli S.V."/>
            <person name="Oggioni M."/>
            <person name="Dunning Hotopp J.C."/>
            <person name="Hu F.Z."/>
            <person name="Riley D.R."/>
            <person name="Covacci A."/>
            <person name="Mitchell T.J."/>
            <person name="Bentley S.D."/>
            <person name="Kilian M."/>
            <person name="Ehrlich G.D."/>
            <person name="Rappuoli R."/>
            <person name="Moxon E.R."/>
            <person name="Masignani V."/>
        </authorList>
    </citation>
    <scope>NUCLEOTIDE SEQUENCE [LARGE SCALE GENOMIC DNA]</scope>
    <source>
        <strain>Hungary19A-6</strain>
    </source>
</reference>
<feature type="chain" id="PRO_1000094354" description="Ribitol-5-phosphate cytidylyltransferase">
    <location>
        <begin position="1"/>
        <end position="235"/>
    </location>
</feature>
<feature type="binding site" evidence="1">
    <location>
        <begin position="7"/>
        <end position="10"/>
    </location>
    <ligand>
        <name>CTP</name>
        <dbReference type="ChEBI" id="CHEBI:37563"/>
    </ligand>
</feature>
<feature type="binding site" evidence="1">
    <location>
        <begin position="82"/>
        <end position="88"/>
    </location>
    <ligand>
        <name>CTP</name>
        <dbReference type="ChEBI" id="CHEBI:37563"/>
    </ligand>
</feature>
<feature type="binding site" evidence="1">
    <location>
        <position position="113"/>
    </location>
    <ligand>
        <name>CTP</name>
        <dbReference type="ChEBI" id="CHEBI:37563"/>
    </ligand>
</feature>
<feature type="site" description="Transition state stabilizer" evidence="1">
    <location>
        <position position="14"/>
    </location>
</feature>
<feature type="site" description="Transition state stabilizer" evidence="1">
    <location>
        <position position="22"/>
    </location>
</feature>
<feature type="site" description="Positions ribitol 5-phosphate for the nucleophilic attack" evidence="1">
    <location>
        <position position="161"/>
    </location>
</feature>
<feature type="site" description="Positions ribitol 5-phosphate for the nucleophilic attack" evidence="1">
    <location>
        <position position="218"/>
    </location>
</feature>
<proteinExistence type="inferred from homology"/>
<accession>B1IC62</accession>
<dbReference type="EC" id="2.7.7.40" evidence="1"/>
<dbReference type="EMBL" id="CP000936">
    <property type="protein sequence ID" value="ACA36207.1"/>
    <property type="molecule type" value="Genomic_DNA"/>
</dbReference>
<dbReference type="RefSeq" id="WP_000638504.1">
    <property type="nucleotide sequence ID" value="NC_010380.1"/>
</dbReference>
<dbReference type="SMR" id="B1IC62"/>
<dbReference type="KEGG" id="spv:SPH_1387"/>
<dbReference type="HOGENOM" id="CLU_061281_2_3_9"/>
<dbReference type="UniPathway" id="UPA00790"/>
<dbReference type="Proteomes" id="UP000002163">
    <property type="component" value="Chromosome"/>
</dbReference>
<dbReference type="GO" id="GO:0050518">
    <property type="term" value="F:2-C-methyl-D-erythritol 4-phosphate cytidylyltransferase activity"/>
    <property type="evidence" value="ECO:0007669"/>
    <property type="project" value="TreeGrafter"/>
</dbReference>
<dbReference type="GO" id="GO:0047349">
    <property type="term" value="F:D-ribitol-5-phosphate cytidylyltransferase activity"/>
    <property type="evidence" value="ECO:0007669"/>
    <property type="project" value="UniProtKB-UniRule"/>
</dbReference>
<dbReference type="GO" id="GO:0071555">
    <property type="term" value="P:cell wall organization"/>
    <property type="evidence" value="ECO:0007669"/>
    <property type="project" value="UniProtKB-KW"/>
</dbReference>
<dbReference type="GO" id="GO:0008299">
    <property type="term" value="P:isoprenoid biosynthetic process"/>
    <property type="evidence" value="ECO:0007669"/>
    <property type="project" value="InterPro"/>
</dbReference>
<dbReference type="GO" id="GO:1902012">
    <property type="term" value="P:poly(ribitol phosphate) teichoic acid biosynthetic process"/>
    <property type="evidence" value="ECO:0007669"/>
    <property type="project" value="UniProtKB-UniRule"/>
</dbReference>
<dbReference type="CDD" id="cd02516">
    <property type="entry name" value="CDP-ME_synthetase"/>
    <property type="match status" value="1"/>
</dbReference>
<dbReference type="FunFam" id="3.90.550.10:FF:000003">
    <property type="entry name" value="2-C-methyl-D-erythritol 4-phosphate cytidylyltransferase"/>
    <property type="match status" value="1"/>
</dbReference>
<dbReference type="Gene3D" id="3.90.550.10">
    <property type="entry name" value="Spore Coat Polysaccharide Biosynthesis Protein SpsA, Chain A"/>
    <property type="match status" value="1"/>
</dbReference>
<dbReference type="HAMAP" id="MF_02068">
    <property type="entry name" value="TarI"/>
    <property type="match status" value="1"/>
</dbReference>
<dbReference type="InterPro" id="IPR034683">
    <property type="entry name" value="IspD/TarI"/>
</dbReference>
<dbReference type="InterPro" id="IPR050088">
    <property type="entry name" value="IspD/TarI_cytidylyltransf_bact"/>
</dbReference>
<dbReference type="InterPro" id="IPR018294">
    <property type="entry name" value="ISPD_synthase_CS"/>
</dbReference>
<dbReference type="InterPro" id="IPR029044">
    <property type="entry name" value="Nucleotide-diphossugar_trans"/>
</dbReference>
<dbReference type="InterPro" id="IPR034709">
    <property type="entry name" value="TarI"/>
</dbReference>
<dbReference type="NCBIfam" id="NF001183">
    <property type="entry name" value="PRK00155.1-3"/>
    <property type="match status" value="1"/>
</dbReference>
<dbReference type="PANTHER" id="PTHR32125">
    <property type="entry name" value="2-C-METHYL-D-ERYTHRITOL 4-PHOSPHATE CYTIDYLYLTRANSFERASE, CHLOROPLASTIC"/>
    <property type="match status" value="1"/>
</dbReference>
<dbReference type="PANTHER" id="PTHR32125:SF8">
    <property type="entry name" value="RIBITOL-5-PHOSPHATE CYTIDYLYLTRANSFERASE"/>
    <property type="match status" value="1"/>
</dbReference>
<dbReference type="Pfam" id="PF01128">
    <property type="entry name" value="IspD"/>
    <property type="match status" value="1"/>
</dbReference>
<dbReference type="SUPFAM" id="SSF53448">
    <property type="entry name" value="Nucleotide-diphospho-sugar transferases"/>
    <property type="match status" value="1"/>
</dbReference>
<dbReference type="PROSITE" id="PS01295">
    <property type="entry name" value="ISPD"/>
    <property type="match status" value="1"/>
</dbReference>
<comment type="function">
    <text evidence="1">Catalyzes the transfer of the cytidylyl group of CTP to D-ribitol 5-phosphate.</text>
</comment>
<comment type="catalytic activity">
    <reaction evidence="1">
        <text>D-ribitol 5-phosphate + CTP + H(+) = CDP-L-ribitol + diphosphate</text>
        <dbReference type="Rhea" id="RHEA:12456"/>
        <dbReference type="ChEBI" id="CHEBI:15378"/>
        <dbReference type="ChEBI" id="CHEBI:33019"/>
        <dbReference type="ChEBI" id="CHEBI:37563"/>
        <dbReference type="ChEBI" id="CHEBI:57608"/>
        <dbReference type="ChEBI" id="CHEBI:57695"/>
        <dbReference type="EC" id="2.7.7.40"/>
    </reaction>
</comment>
<comment type="pathway">
    <text evidence="1">Cell wall biogenesis; poly(ribitol phosphate) teichoic acid biosynthesis.</text>
</comment>
<comment type="similarity">
    <text evidence="1">Belongs to the IspD/TarI cytidylyltransferase family. TarI subfamily.</text>
</comment>
<keyword id="KW-0961">Cell wall biogenesis/degradation</keyword>
<keyword id="KW-0548">Nucleotidyltransferase</keyword>
<keyword id="KW-0777">Teichoic acid biosynthesis</keyword>
<keyword id="KW-0808">Transferase</keyword>